<organism>
    <name type="scientific">Staphylococcus haemolyticus (strain JCSC1435)</name>
    <dbReference type="NCBI Taxonomy" id="279808"/>
    <lineage>
        <taxon>Bacteria</taxon>
        <taxon>Bacillati</taxon>
        <taxon>Bacillota</taxon>
        <taxon>Bacilli</taxon>
        <taxon>Bacillales</taxon>
        <taxon>Staphylococcaceae</taxon>
        <taxon>Staphylococcus</taxon>
    </lineage>
</organism>
<accession>Q4L9P7</accession>
<evidence type="ECO:0000255" key="1">
    <source>
        <dbReference type="HAMAP-Rule" id="MF_01713"/>
    </source>
</evidence>
<reference key="1">
    <citation type="journal article" date="2005" name="J. Bacteriol.">
        <title>Whole-genome sequencing of Staphylococcus haemolyticus uncovers the extreme plasticity of its genome and the evolution of human-colonizing staphylococcal species.</title>
        <authorList>
            <person name="Takeuchi F."/>
            <person name="Watanabe S."/>
            <person name="Baba T."/>
            <person name="Yuzawa H."/>
            <person name="Ito T."/>
            <person name="Morimoto Y."/>
            <person name="Kuroda M."/>
            <person name="Cui L."/>
            <person name="Takahashi M."/>
            <person name="Ankai A."/>
            <person name="Baba S."/>
            <person name="Fukui S."/>
            <person name="Lee J.C."/>
            <person name="Hiramatsu K."/>
        </authorList>
    </citation>
    <scope>NUCLEOTIDE SEQUENCE [LARGE SCALE GENOMIC DNA]</scope>
    <source>
        <strain>JCSC1435</strain>
    </source>
</reference>
<gene>
    <name evidence="1" type="primary">phnC</name>
    <name type="ordered locus">SH0319</name>
</gene>
<feature type="chain" id="PRO_0000274760" description="Phosphonates import ATP-binding protein PhnC">
    <location>
        <begin position="1"/>
        <end position="257"/>
    </location>
</feature>
<feature type="domain" description="ABC transporter" evidence="1">
    <location>
        <begin position="4"/>
        <end position="248"/>
    </location>
</feature>
<feature type="binding site" evidence="1">
    <location>
        <begin position="37"/>
        <end position="44"/>
    </location>
    <ligand>
        <name>ATP</name>
        <dbReference type="ChEBI" id="CHEBI:30616"/>
    </ligand>
</feature>
<proteinExistence type="inferred from homology"/>
<comment type="function">
    <text evidence="1">Part of the ABC transporter complex PhnCDE involved in phosphonates import. Responsible for energy coupling to the transport system.</text>
</comment>
<comment type="catalytic activity">
    <reaction evidence="1">
        <text>phosphonate(out) + ATP + H2O = phosphonate(in) + ADP + phosphate + H(+)</text>
        <dbReference type="Rhea" id="RHEA:18065"/>
        <dbReference type="ChEBI" id="CHEBI:15377"/>
        <dbReference type="ChEBI" id="CHEBI:15378"/>
        <dbReference type="ChEBI" id="CHEBI:16215"/>
        <dbReference type="ChEBI" id="CHEBI:30616"/>
        <dbReference type="ChEBI" id="CHEBI:43474"/>
        <dbReference type="ChEBI" id="CHEBI:456216"/>
        <dbReference type="EC" id="7.3.2.2"/>
    </reaction>
</comment>
<comment type="subunit">
    <text evidence="1">The complex is composed of two ATP-binding proteins (PhnC), two transmembrane proteins (PhnE) and a solute-binding protein (PhnD).</text>
</comment>
<comment type="subcellular location">
    <subcellularLocation>
        <location evidence="1">Cell membrane</location>
        <topology evidence="1">Peripheral membrane protein</topology>
    </subcellularLocation>
</comment>
<comment type="similarity">
    <text evidence="1">Belongs to the ABC transporter superfamily. Phosphonates importer (TC 3.A.1.9.1) family.</text>
</comment>
<protein>
    <recommendedName>
        <fullName evidence="1">Phosphonates import ATP-binding protein PhnC</fullName>
        <ecNumber evidence="1">7.3.2.2</ecNumber>
    </recommendedName>
</protein>
<sequence length="257" mass="28568">MSQIEFKDVNKVYPNGHVGLKDINLNIEKGDFAVIVGLSGAGKSTLLRSVNRLHDITSGDILIEGKSITKAKGNDLLMMRRNIGMIFQHFNLVKRSSVLRNVLSGRVGYHPTWKMVLGLFPKEDKVKAMDALERVNILDKYDQRSDELSGGQQQRISIARALAQEPAIILADEPVASLDPLTTKQVMDDLKKINEELGITILINLHFVDLALEYGTRIIGLRAGELVFDGPASEATEEVFNDIYGRKLKDDEKLGVE</sequence>
<dbReference type="EC" id="7.3.2.2" evidence="1"/>
<dbReference type="EMBL" id="AP006716">
    <property type="protein sequence ID" value="BAE03628.1"/>
    <property type="molecule type" value="Genomic_DNA"/>
</dbReference>
<dbReference type="RefSeq" id="WP_011274648.1">
    <property type="nucleotide sequence ID" value="NC_007168.1"/>
</dbReference>
<dbReference type="SMR" id="Q4L9P7"/>
<dbReference type="GeneID" id="93779742"/>
<dbReference type="KEGG" id="sha:SH0319"/>
<dbReference type="eggNOG" id="COG3638">
    <property type="taxonomic scope" value="Bacteria"/>
</dbReference>
<dbReference type="HOGENOM" id="CLU_000604_1_22_9"/>
<dbReference type="OrthoDB" id="9802264at2"/>
<dbReference type="Proteomes" id="UP000000543">
    <property type="component" value="Chromosome"/>
</dbReference>
<dbReference type="GO" id="GO:0005886">
    <property type="term" value="C:plasma membrane"/>
    <property type="evidence" value="ECO:0007669"/>
    <property type="project" value="UniProtKB-SubCell"/>
</dbReference>
<dbReference type="GO" id="GO:0015416">
    <property type="term" value="F:ABC-type phosphonate transporter activity"/>
    <property type="evidence" value="ECO:0007669"/>
    <property type="project" value="UniProtKB-EC"/>
</dbReference>
<dbReference type="GO" id="GO:0005524">
    <property type="term" value="F:ATP binding"/>
    <property type="evidence" value="ECO:0007669"/>
    <property type="project" value="UniProtKB-KW"/>
</dbReference>
<dbReference type="GO" id="GO:0016887">
    <property type="term" value="F:ATP hydrolysis activity"/>
    <property type="evidence" value="ECO:0007669"/>
    <property type="project" value="InterPro"/>
</dbReference>
<dbReference type="CDD" id="cd03256">
    <property type="entry name" value="ABC_PhnC_transporter"/>
    <property type="match status" value="1"/>
</dbReference>
<dbReference type="Gene3D" id="3.40.50.300">
    <property type="entry name" value="P-loop containing nucleotide triphosphate hydrolases"/>
    <property type="match status" value="1"/>
</dbReference>
<dbReference type="InterPro" id="IPR003593">
    <property type="entry name" value="AAA+_ATPase"/>
</dbReference>
<dbReference type="InterPro" id="IPR003439">
    <property type="entry name" value="ABC_transporter-like_ATP-bd"/>
</dbReference>
<dbReference type="InterPro" id="IPR017871">
    <property type="entry name" value="ABC_transporter-like_CS"/>
</dbReference>
<dbReference type="InterPro" id="IPR012693">
    <property type="entry name" value="ABC_transpr_PhnC"/>
</dbReference>
<dbReference type="InterPro" id="IPR050086">
    <property type="entry name" value="MetN_ABC_transporter-like"/>
</dbReference>
<dbReference type="InterPro" id="IPR027417">
    <property type="entry name" value="P-loop_NTPase"/>
</dbReference>
<dbReference type="NCBIfam" id="TIGR02315">
    <property type="entry name" value="ABC_phnC"/>
    <property type="match status" value="1"/>
</dbReference>
<dbReference type="PANTHER" id="PTHR43166">
    <property type="entry name" value="AMINO ACID IMPORT ATP-BINDING PROTEIN"/>
    <property type="match status" value="1"/>
</dbReference>
<dbReference type="PANTHER" id="PTHR43166:SF6">
    <property type="entry name" value="PHOSPHONATES IMPORT ATP-BINDING PROTEIN PHNC"/>
    <property type="match status" value="1"/>
</dbReference>
<dbReference type="Pfam" id="PF00005">
    <property type="entry name" value="ABC_tran"/>
    <property type="match status" value="1"/>
</dbReference>
<dbReference type="SMART" id="SM00382">
    <property type="entry name" value="AAA"/>
    <property type="match status" value="1"/>
</dbReference>
<dbReference type="SUPFAM" id="SSF52540">
    <property type="entry name" value="P-loop containing nucleoside triphosphate hydrolases"/>
    <property type="match status" value="1"/>
</dbReference>
<dbReference type="PROSITE" id="PS00211">
    <property type="entry name" value="ABC_TRANSPORTER_1"/>
    <property type="match status" value="1"/>
</dbReference>
<dbReference type="PROSITE" id="PS50893">
    <property type="entry name" value="ABC_TRANSPORTER_2"/>
    <property type="match status" value="1"/>
</dbReference>
<dbReference type="PROSITE" id="PS51249">
    <property type="entry name" value="PHNC"/>
    <property type="match status" value="1"/>
</dbReference>
<name>PHNC_STAHJ</name>
<keyword id="KW-0067">ATP-binding</keyword>
<keyword id="KW-1003">Cell membrane</keyword>
<keyword id="KW-0472">Membrane</keyword>
<keyword id="KW-0547">Nucleotide-binding</keyword>
<keyword id="KW-0918">Phosphonate transport</keyword>
<keyword id="KW-1278">Translocase</keyword>
<keyword id="KW-0813">Transport</keyword>